<proteinExistence type="inferred from homology"/>
<protein>
    <recommendedName>
        <fullName evidence="1">DNA integrity scanning protein DisA</fullName>
    </recommendedName>
    <alternativeName>
        <fullName evidence="1">Cyclic di-AMP synthase</fullName>
        <shortName evidence="1">c-di-AMP synthase</shortName>
    </alternativeName>
    <alternativeName>
        <fullName evidence="1">Diadenylate cyclase</fullName>
        <ecNumber evidence="1">2.7.7.85</ecNumber>
    </alternativeName>
</protein>
<gene>
    <name evidence="1" type="primary">disA</name>
    <name type="ordered locus">BAMEG_0099</name>
</gene>
<dbReference type="EC" id="2.7.7.85" evidence="1"/>
<dbReference type="EMBL" id="CP001215">
    <property type="protein sequence ID" value="ACP12545.1"/>
    <property type="molecule type" value="Genomic_DNA"/>
</dbReference>
<dbReference type="RefSeq" id="WP_000392168.1">
    <property type="nucleotide sequence ID" value="NC_012581.1"/>
</dbReference>
<dbReference type="SMR" id="C3LJ56"/>
<dbReference type="GeneID" id="93010970"/>
<dbReference type="KEGG" id="bah:BAMEG_0099"/>
<dbReference type="HOGENOM" id="CLU_787128_0_0_9"/>
<dbReference type="GO" id="GO:0004016">
    <property type="term" value="F:adenylate cyclase activity"/>
    <property type="evidence" value="ECO:0007669"/>
    <property type="project" value="TreeGrafter"/>
</dbReference>
<dbReference type="GO" id="GO:0005524">
    <property type="term" value="F:ATP binding"/>
    <property type="evidence" value="ECO:0007669"/>
    <property type="project" value="UniProtKB-UniRule"/>
</dbReference>
<dbReference type="GO" id="GO:0106408">
    <property type="term" value="F:diadenylate cyclase activity"/>
    <property type="evidence" value="ECO:0007669"/>
    <property type="project" value="UniProtKB-EC"/>
</dbReference>
<dbReference type="GO" id="GO:0003677">
    <property type="term" value="F:DNA binding"/>
    <property type="evidence" value="ECO:0007669"/>
    <property type="project" value="UniProtKB-UniRule"/>
</dbReference>
<dbReference type="GO" id="GO:0006281">
    <property type="term" value="P:DNA repair"/>
    <property type="evidence" value="ECO:0007669"/>
    <property type="project" value="UniProtKB-UniRule"/>
</dbReference>
<dbReference type="FunFam" id="1.10.150.20:FF:000023">
    <property type="entry name" value="DNA integrity scanning protein DisA"/>
    <property type="match status" value="1"/>
</dbReference>
<dbReference type="FunFam" id="1.20.1260.110:FF:000001">
    <property type="entry name" value="DNA integrity scanning protein DisA"/>
    <property type="match status" value="1"/>
</dbReference>
<dbReference type="FunFam" id="3.40.1700.10:FF:000001">
    <property type="entry name" value="DNA integrity scanning protein DisA"/>
    <property type="match status" value="1"/>
</dbReference>
<dbReference type="Gene3D" id="1.10.150.20">
    <property type="entry name" value="5' to 3' exonuclease, C-terminal subdomain"/>
    <property type="match status" value="1"/>
</dbReference>
<dbReference type="Gene3D" id="1.20.1260.110">
    <property type="entry name" value="DNA integrity scanning linker region"/>
    <property type="match status" value="1"/>
</dbReference>
<dbReference type="Gene3D" id="3.40.1700.10">
    <property type="entry name" value="DNA integrity scanning protein, DisA, N-terminal domain"/>
    <property type="match status" value="1"/>
</dbReference>
<dbReference type="HAMAP" id="MF_01438">
    <property type="entry name" value="DisA"/>
    <property type="match status" value="1"/>
</dbReference>
<dbReference type="InterPro" id="IPR050338">
    <property type="entry name" value="DisA"/>
</dbReference>
<dbReference type="InterPro" id="IPR038331">
    <property type="entry name" value="DisA_sf"/>
</dbReference>
<dbReference type="InterPro" id="IPR036888">
    <property type="entry name" value="DNA_integrity_DisA_N_sf"/>
</dbReference>
<dbReference type="InterPro" id="IPR018906">
    <property type="entry name" value="DNA_integrity_scan_DisA_link"/>
</dbReference>
<dbReference type="InterPro" id="IPR003390">
    <property type="entry name" value="DNA_integrity_scan_DisA_N"/>
</dbReference>
<dbReference type="InterPro" id="IPR023763">
    <property type="entry name" value="DNA_integrity_scanning_protein"/>
</dbReference>
<dbReference type="InterPro" id="IPR010994">
    <property type="entry name" value="RuvA_2-like"/>
</dbReference>
<dbReference type="NCBIfam" id="NF010009">
    <property type="entry name" value="PRK13482.1"/>
    <property type="match status" value="1"/>
</dbReference>
<dbReference type="PANTHER" id="PTHR34185">
    <property type="entry name" value="DIADENYLATE CYCLASE"/>
    <property type="match status" value="1"/>
</dbReference>
<dbReference type="PANTHER" id="PTHR34185:SF3">
    <property type="entry name" value="DNA INTEGRITY SCANNING PROTEIN DISA"/>
    <property type="match status" value="1"/>
</dbReference>
<dbReference type="Pfam" id="PF02457">
    <property type="entry name" value="DAC"/>
    <property type="match status" value="1"/>
</dbReference>
<dbReference type="Pfam" id="PF10635">
    <property type="entry name" value="DisA-linker"/>
    <property type="match status" value="1"/>
</dbReference>
<dbReference type="SUPFAM" id="SSF47781">
    <property type="entry name" value="RuvA domain 2-like"/>
    <property type="match status" value="1"/>
</dbReference>
<dbReference type="SUPFAM" id="SSF143597">
    <property type="entry name" value="YojJ-like"/>
    <property type="match status" value="1"/>
</dbReference>
<dbReference type="PROSITE" id="PS51794">
    <property type="entry name" value="DAC"/>
    <property type="match status" value="1"/>
</dbReference>
<reference key="1">
    <citation type="submission" date="2008-10" db="EMBL/GenBank/DDBJ databases">
        <title>Genome sequence of Bacillus anthracis str. CDC 684.</title>
        <authorList>
            <person name="Dodson R.J."/>
            <person name="Munk A.C."/>
            <person name="Brettin T."/>
            <person name="Bruce D."/>
            <person name="Detter C."/>
            <person name="Tapia R."/>
            <person name="Han C."/>
            <person name="Sutton G."/>
            <person name="Sims D."/>
        </authorList>
    </citation>
    <scope>NUCLEOTIDE SEQUENCE [LARGE SCALE GENOMIC DNA]</scope>
    <source>
        <strain>CDC 684 / NRRL 3495</strain>
    </source>
</reference>
<accession>C3LJ56</accession>
<feature type="chain" id="PRO_1000184908" description="DNA integrity scanning protein DisA">
    <location>
        <begin position="1"/>
        <end position="357"/>
    </location>
</feature>
<feature type="domain" description="DAC" evidence="2">
    <location>
        <begin position="8"/>
        <end position="146"/>
    </location>
</feature>
<feature type="binding site" evidence="1">
    <location>
        <position position="75"/>
    </location>
    <ligand>
        <name>ATP</name>
        <dbReference type="ChEBI" id="CHEBI:30616"/>
    </ligand>
</feature>
<feature type="binding site" evidence="1">
    <location>
        <position position="93"/>
    </location>
    <ligand>
        <name>ATP</name>
        <dbReference type="ChEBI" id="CHEBI:30616"/>
    </ligand>
</feature>
<feature type="binding site" evidence="1">
    <location>
        <begin position="106"/>
        <end position="110"/>
    </location>
    <ligand>
        <name>ATP</name>
        <dbReference type="ChEBI" id="CHEBI:30616"/>
    </ligand>
</feature>
<keyword id="KW-0067">ATP-binding</keyword>
<keyword id="KW-0227">DNA damage</keyword>
<keyword id="KW-0234">DNA repair</keyword>
<keyword id="KW-0238">DNA-binding</keyword>
<keyword id="KW-0460">Magnesium</keyword>
<keyword id="KW-0547">Nucleotide-binding</keyword>
<keyword id="KW-0548">Nucleotidyltransferase</keyword>
<keyword id="KW-0808">Transferase</keyword>
<name>DISA_BACAC</name>
<comment type="function">
    <text evidence="1">Participates in a DNA-damage check-point that is active prior to asymmetric division when DNA is damaged. DisA forms globular foci that rapidly scan along the chromosomes during sporulation, searching for lesions. When a lesion is present, DisA pauses at the lesion site. This triggers a cellular response that culminates in a temporary block in sporulation initiation.</text>
</comment>
<comment type="function">
    <text evidence="1">Also has diadenylate cyclase activity, catalyzing the condensation of 2 ATP molecules into cyclic di-AMP (c-di-AMP). c-di-AMP acts as a signaling molecule that couples DNA integrity with progression of sporulation. The rise in c-di-AMP level generated by DisA while scanning the chromosome, operates as a positive signal that advances sporulation; upon encountering a lesion, the DisA focus arrests at the damaged site and halts c-di-AMP synthesis.</text>
</comment>
<comment type="catalytic activity">
    <reaction evidence="1">
        <text>2 ATP = 3',3'-c-di-AMP + 2 diphosphate</text>
        <dbReference type="Rhea" id="RHEA:35655"/>
        <dbReference type="ChEBI" id="CHEBI:30616"/>
        <dbReference type="ChEBI" id="CHEBI:33019"/>
        <dbReference type="ChEBI" id="CHEBI:71500"/>
        <dbReference type="EC" id="2.7.7.85"/>
    </reaction>
</comment>
<comment type="cofactor">
    <cofactor evidence="1">
        <name>Mg(2+)</name>
        <dbReference type="ChEBI" id="CHEBI:18420"/>
    </cofactor>
</comment>
<comment type="subunit">
    <text evidence="1">Homooctamer.</text>
</comment>
<comment type="similarity">
    <text evidence="1">Belongs to the DisA family.</text>
</comment>
<evidence type="ECO:0000255" key="1">
    <source>
        <dbReference type="HAMAP-Rule" id="MF_01438"/>
    </source>
</evidence>
<evidence type="ECO:0000255" key="2">
    <source>
        <dbReference type="PROSITE-ProRule" id="PRU01130"/>
    </source>
</evidence>
<sequence length="357" mass="40095">MEENKQRVKSMINILQLVAPGTPLREGIDNVLRAQTGGLIVLGYNEQIKSIVDGGFHINCAFSPASLYELAKMDGALILNETGSKILIANAQLVPESSIDSIETGMRHRTAERVAKQTGSLVVAISQRRNVITLYQGNLRYTLKDIGVILTKANQAIQTLEKYKAVWNDGITNLGILEFEEVVTMSEVVHVLHSVEMVLRIKNEILSYIHELGTEGRLIRLQLTELLADLEAEAALLIKDYYQEKTQDHHQILKKLQELANTQLLEDSDLVKLLGYPGQTSLEESVTPRGYRITSKISRVPPLIIENLINRFKTLQGVCRATINELDDVEGIGEVRAKKIREGLKRIQEHLYMSRHN</sequence>
<organism>
    <name type="scientific">Bacillus anthracis (strain CDC 684 / NRRL 3495)</name>
    <dbReference type="NCBI Taxonomy" id="568206"/>
    <lineage>
        <taxon>Bacteria</taxon>
        <taxon>Bacillati</taxon>
        <taxon>Bacillota</taxon>
        <taxon>Bacilli</taxon>
        <taxon>Bacillales</taxon>
        <taxon>Bacillaceae</taxon>
        <taxon>Bacillus</taxon>
        <taxon>Bacillus cereus group</taxon>
    </lineage>
</organism>